<protein>
    <recommendedName>
        <fullName evidence="1">Transcriptional repressor NrdR</fullName>
    </recommendedName>
</protein>
<evidence type="ECO:0000255" key="1">
    <source>
        <dbReference type="HAMAP-Rule" id="MF_00440"/>
    </source>
</evidence>
<proteinExistence type="inferred from homology"/>
<name>NRDR_JANMA</name>
<comment type="function">
    <text evidence="1">Negatively regulates transcription of bacterial ribonucleotide reductase nrd genes and operons by binding to NrdR-boxes.</text>
</comment>
<comment type="cofactor">
    <cofactor evidence="1">
        <name>Zn(2+)</name>
        <dbReference type="ChEBI" id="CHEBI:29105"/>
    </cofactor>
    <text evidence="1">Binds 1 zinc ion.</text>
</comment>
<comment type="similarity">
    <text evidence="1">Belongs to the NrdR family.</text>
</comment>
<gene>
    <name evidence="1" type="primary">nrdR</name>
    <name type="ordered locus">mma_2442</name>
</gene>
<organism>
    <name type="scientific">Janthinobacterium sp. (strain Marseille)</name>
    <name type="common">Minibacterium massiliensis</name>
    <dbReference type="NCBI Taxonomy" id="375286"/>
    <lineage>
        <taxon>Bacteria</taxon>
        <taxon>Pseudomonadati</taxon>
        <taxon>Pseudomonadota</taxon>
        <taxon>Betaproteobacteria</taxon>
        <taxon>Burkholderiales</taxon>
        <taxon>Oxalobacteraceae</taxon>
        <taxon>Janthinobacterium</taxon>
    </lineage>
</organism>
<keyword id="KW-0067">ATP-binding</keyword>
<keyword id="KW-0238">DNA-binding</keyword>
<keyword id="KW-0479">Metal-binding</keyword>
<keyword id="KW-0547">Nucleotide-binding</keyword>
<keyword id="KW-0678">Repressor</keyword>
<keyword id="KW-0804">Transcription</keyword>
<keyword id="KW-0805">Transcription regulation</keyword>
<keyword id="KW-0862">Zinc</keyword>
<keyword id="KW-0863">Zinc-finger</keyword>
<dbReference type="EMBL" id="CP000269">
    <property type="protein sequence ID" value="ABR89909.1"/>
    <property type="molecule type" value="Genomic_DNA"/>
</dbReference>
<dbReference type="RefSeq" id="WP_012080295.1">
    <property type="nucleotide sequence ID" value="NC_009659.1"/>
</dbReference>
<dbReference type="SMR" id="A6T0T5"/>
<dbReference type="STRING" id="375286.mma_2442"/>
<dbReference type="KEGG" id="mms:mma_2442"/>
<dbReference type="eggNOG" id="COG1327">
    <property type="taxonomic scope" value="Bacteria"/>
</dbReference>
<dbReference type="HOGENOM" id="CLU_108412_0_0_4"/>
<dbReference type="OrthoDB" id="9807461at2"/>
<dbReference type="Proteomes" id="UP000006388">
    <property type="component" value="Chromosome"/>
</dbReference>
<dbReference type="GO" id="GO:0005524">
    <property type="term" value="F:ATP binding"/>
    <property type="evidence" value="ECO:0007669"/>
    <property type="project" value="UniProtKB-KW"/>
</dbReference>
<dbReference type="GO" id="GO:0003677">
    <property type="term" value="F:DNA binding"/>
    <property type="evidence" value="ECO:0007669"/>
    <property type="project" value="UniProtKB-KW"/>
</dbReference>
<dbReference type="GO" id="GO:0008270">
    <property type="term" value="F:zinc ion binding"/>
    <property type="evidence" value="ECO:0007669"/>
    <property type="project" value="UniProtKB-UniRule"/>
</dbReference>
<dbReference type="GO" id="GO:0045892">
    <property type="term" value="P:negative regulation of DNA-templated transcription"/>
    <property type="evidence" value="ECO:0007669"/>
    <property type="project" value="UniProtKB-UniRule"/>
</dbReference>
<dbReference type="HAMAP" id="MF_00440">
    <property type="entry name" value="NrdR"/>
    <property type="match status" value="1"/>
</dbReference>
<dbReference type="InterPro" id="IPR005144">
    <property type="entry name" value="ATP-cone_dom"/>
</dbReference>
<dbReference type="InterPro" id="IPR055173">
    <property type="entry name" value="NrdR-like_N"/>
</dbReference>
<dbReference type="InterPro" id="IPR003796">
    <property type="entry name" value="RNR_NrdR-like"/>
</dbReference>
<dbReference type="NCBIfam" id="TIGR00244">
    <property type="entry name" value="transcriptional regulator NrdR"/>
    <property type="match status" value="1"/>
</dbReference>
<dbReference type="PANTHER" id="PTHR30455">
    <property type="entry name" value="TRANSCRIPTIONAL REPRESSOR NRDR"/>
    <property type="match status" value="1"/>
</dbReference>
<dbReference type="PANTHER" id="PTHR30455:SF2">
    <property type="entry name" value="TRANSCRIPTIONAL REPRESSOR NRDR"/>
    <property type="match status" value="1"/>
</dbReference>
<dbReference type="Pfam" id="PF03477">
    <property type="entry name" value="ATP-cone"/>
    <property type="match status" value="1"/>
</dbReference>
<dbReference type="Pfam" id="PF22811">
    <property type="entry name" value="Zn_ribbon_NrdR"/>
    <property type="match status" value="1"/>
</dbReference>
<dbReference type="PROSITE" id="PS51161">
    <property type="entry name" value="ATP_CONE"/>
    <property type="match status" value="1"/>
</dbReference>
<sequence>MKCPFCQHDDTQVLDTRVSEEGDSIRRRRRCTSCDKRFTTYERIELTMPVVVKKNGSRTDFDPKKLQGSLQLALRKRPVSAEAVDAAIHRIEQKLLSSGEREVISGQIGELVMRELQRLDKIAYIRFASVYKSFEDVAEFQDAIAEVGRERKPAK</sequence>
<accession>A6T0T5</accession>
<feature type="chain" id="PRO_1000080759" description="Transcriptional repressor NrdR">
    <location>
        <begin position="1"/>
        <end position="155"/>
    </location>
</feature>
<feature type="domain" description="ATP-cone" evidence="1">
    <location>
        <begin position="49"/>
        <end position="139"/>
    </location>
</feature>
<feature type="zinc finger region" evidence="1">
    <location>
        <begin position="3"/>
        <end position="34"/>
    </location>
</feature>
<reference key="1">
    <citation type="journal article" date="2007" name="PLoS Genet.">
        <title>Genome analysis of Minibacterium massiliensis highlights the convergent evolution of water-living bacteria.</title>
        <authorList>
            <person name="Audic S."/>
            <person name="Robert C."/>
            <person name="Campagna B."/>
            <person name="Parinello H."/>
            <person name="Claverie J.-M."/>
            <person name="Raoult D."/>
            <person name="Drancourt M."/>
        </authorList>
    </citation>
    <scope>NUCLEOTIDE SEQUENCE [LARGE SCALE GENOMIC DNA]</scope>
    <source>
        <strain>Marseille</strain>
    </source>
</reference>